<sequence>MQSWSETAVPSVPGQGPPLRLFDTADRQVRPVTPGRTATMYVCGITPYDATHLGHAATYLTFDLVNRIWRDAGHDVHYVQNVTDVDDPLFERANRDGEDWVVLGMRETALFREDMEALRVLPPRDYIGAVESIGEVIEMVEKFVASGAAYVVDDPEFPDVYFRANATEQFGYESGYDRETMDKFFAERGGDPDRPGKEDPLDALVWRAVRPGEPSWPSPFGPGRPGWHIECSAIALNRIGSGFDVQGGGSDLIFPHHEYSAAHAESATGDRRFARHYVHTGMIGLDGEKMSKSRGNLVFVSKLRGEGVDPAAIRLGLLSGHYRQDRPWTEQLLADAHTRLQLWKDAAALESAPSATDTIARLRQHLADDLDTPKALDALDGWARRALDHGGSDTNAPSEFAAAVDALLGVRLRRP</sequence>
<reference key="1">
    <citation type="journal article" date="2006" name="Proc. Natl. Acad. Sci. U.S.A.">
        <title>The complete genome of Rhodococcus sp. RHA1 provides insights into a catabolic powerhouse.</title>
        <authorList>
            <person name="McLeod M.P."/>
            <person name="Warren R.L."/>
            <person name="Hsiao W.W.L."/>
            <person name="Araki N."/>
            <person name="Myhre M."/>
            <person name="Fernandes C."/>
            <person name="Miyazawa D."/>
            <person name="Wong W."/>
            <person name="Lillquist A.L."/>
            <person name="Wang D."/>
            <person name="Dosanjh M."/>
            <person name="Hara H."/>
            <person name="Petrescu A."/>
            <person name="Morin R.D."/>
            <person name="Yang G."/>
            <person name="Stott J.M."/>
            <person name="Schein J.E."/>
            <person name="Shin H."/>
            <person name="Smailus D."/>
            <person name="Siddiqui A.S."/>
            <person name="Marra M.A."/>
            <person name="Jones S.J.M."/>
            <person name="Holt R."/>
            <person name="Brinkman F.S.L."/>
            <person name="Miyauchi K."/>
            <person name="Fukuda M."/>
            <person name="Davies J.E."/>
            <person name="Mohn W.W."/>
            <person name="Eltis L.D."/>
        </authorList>
    </citation>
    <scope>NUCLEOTIDE SEQUENCE [LARGE SCALE GENOMIC DNA]</scope>
    <source>
        <strain>RHA1</strain>
    </source>
</reference>
<gene>
    <name evidence="1" type="primary">mshC</name>
    <name type="ordered locus">RHA1_ro00877</name>
</gene>
<proteinExistence type="inferred from homology"/>
<dbReference type="EC" id="6.3.1.13" evidence="1"/>
<dbReference type="EMBL" id="CP000431">
    <property type="protein sequence ID" value="ABG92710.1"/>
    <property type="molecule type" value="Genomic_DNA"/>
</dbReference>
<dbReference type="RefSeq" id="WP_011594098.1">
    <property type="nucleotide sequence ID" value="NC_008268.1"/>
</dbReference>
<dbReference type="SMR" id="Q0SIC6"/>
<dbReference type="KEGG" id="rha:RHA1_ro00877"/>
<dbReference type="PATRIC" id="fig|101510.16.peg.897"/>
<dbReference type="eggNOG" id="COG0215">
    <property type="taxonomic scope" value="Bacteria"/>
</dbReference>
<dbReference type="HOGENOM" id="CLU_013528_0_0_11"/>
<dbReference type="OrthoDB" id="9815130at2"/>
<dbReference type="Proteomes" id="UP000008710">
    <property type="component" value="Chromosome"/>
</dbReference>
<dbReference type="GO" id="GO:0005829">
    <property type="term" value="C:cytosol"/>
    <property type="evidence" value="ECO:0007669"/>
    <property type="project" value="TreeGrafter"/>
</dbReference>
<dbReference type="GO" id="GO:0005524">
    <property type="term" value="F:ATP binding"/>
    <property type="evidence" value="ECO:0007669"/>
    <property type="project" value="UniProtKB-KW"/>
</dbReference>
<dbReference type="GO" id="GO:0035446">
    <property type="term" value="F:cysteine-glucosaminylinositol ligase activity"/>
    <property type="evidence" value="ECO:0007669"/>
    <property type="project" value="UniProtKB-UniRule"/>
</dbReference>
<dbReference type="GO" id="GO:0004817">
    <property type="term" value="F:cysteine-tRNA ligase activity"/>
    <property type="evidence" value="ECO:0007669"/>
    <property type="project" value="TreeGrafter"/>
</dbReference>
<dbReference type="GO" id="GO:0008270">
    <property type="term" value="F:zinc ion binding"/>
    <property type="evidence" value="ECO:0007669"/>
    <property type="project" value="UniProtKB-UniRule"/>
</dbReference>
<dbReference type="GO" id="GO:0006423">
    <property type="term" value="P:cysteinyl-tRNA aminoacylation"/>
    <property type="evidence" value="ECO:0007669"/>
    <property type="project" value="TreeGrafter"/>
</dbReference>
<dbReference type="GO" id="GO:0010125">
    <property type="term" value="P:mycothiol biosynthetic process"/>
    <property type="evidence" value="ECO:0007669"/>
    <property type="project" value="UniProtKB-UniRule"/>
</dbReference>
<dbReference type="CDD" id="cd07955">
    <property type="entry name" value="Anticodon_Ia_Cys_like"/>
    <property type="match status" value="1"/>
</dbReference>
<dbReference type="CDD" id="cd00672">
    <property type="entry name" value="CysRS_core"/>
    <property type="match status" value="1"/>
</dbReference>
<dbReference type="FunFam" id="3.40.50.620:FF:000134">
    <property type="entry name" value="L-cysteine:1D-myo-inositol 2-amino-2-deoxy-alpha-D-glucopyranoside ligase"/>
    <property type="match status" value="1"/>
</dbReference>
<dbReference type="Gene3D" id="1.20.120.640">
    <property type="entry name" value="Anticodon-binding domain of a subclass of class I aminoacyl-tRNA synthetases"/>
    <property type="match status" value="1"/>
</dbReference>
<dbReference type="Gene3D" id="3.40.50.620">
    <property type="entry name" value="HUPs"/>
    <property type="match status" value="1"/>
</dbReference>
<dbReference type="HAMAP" id="MF_01697">
    <property type="entry name" value="MshC"/>
    <property type="match status" value="1"/>
</dbReference>
<dbReference type="InterPro" id="IPR024909">
    <property type="entry name" value="Cys-tRNA/MSH_ligase"/>
</dbReference>
<dbReference type="InterPro" id="IPR017812">
    <property type="entry name" value="Mycothiol_ligase_MshC"/>
</dbReference>
<dbReference type="InterPro" id="IPR014729">
    <property type="entry name" value="Rossmann-like_a/b/a_fold"/>
</dbReference>
<dbReference type="InterPro" id="IPR032678">
    <property type="entry name" value="tRNA-synt_1_cat_dom"/>
</dbReference>
<dbReference type="NCBIfam" id="TIGR03447">
    <property type="entry name" value="mycothiol_MshC"/>
    <property type="match status" value="1"/>
</dbReference>
<dbReference type="PANTHER" id="PTHR10890:SF3">
    <property type="entry name" value="CYSTEINE--TRNA LIGASE, CYTOPLASMIC"/>
    <property type="match status" value="1"/>
</dbReference>
<dbReference type="PANTHER" id="PTHR10890">
    <property type="entry name" value="CYSTEINYL-TRNA SYNTHETASE"/>
    <property type="match status" value="1"/>
</dbReference>
<dbReference type="Pfam" id="PF01406">
    <property type="entry name" value="tRNA-synt_1e"/>
    <property type="match status" value="1"/>
</dbReference>
<dbReference type="PRINTS" id="PR00983">
    <property type="entry name" value="TRNASYNTHCYS"/>
</dbReference>
<dbReference type="SUPFAM" id="SSF52374">
    <property type="entry name" value="Nucleotidylyl transferase"/>
    <property type="match status" value="1"/>
</dbReference>
<name>MSHC_RHOJR</name>
<protein>
    <recommendedName>
        <fullName evidence="1">L-cysteine:1D-myo-inositol 2-amino-2-deoxy-alpha-D-glucopyranoside ligase</fullName>
        <shortName evidence="1">L-Cys:GlcN-Ins ligase</shortName>
        <ecNumber evidence="1">6.3.1.13</ecNumber>
    </recommendedName>
    <alternativeName>
        <fullName evidence="1">Mycothiol ligase</fullName>
        <shortName evidence="1">MSH ligase</shortName>
    </alternativeName>
</protein>
<feature type="chain" id="PRO_0000400477" description="L-cysteine:1D-myo-inositol 2-amino-2-deoxy-alpha-D-glucopyranoside ligase">
    <location>
        <begin position="1"/>
        <end position="415"/>
    </location>
</feature>
<feature type="region of interest" description="Disordered" evidence="2">
    <location>
        <begin position="1"/>
        <end position="20"/>
    </location>
</feature>
<feature type="short sequence motif" description="'HIGH' region" evidence="1">
    <location>
        <begin position="45"/>
        <end position="55"/>
    </location>
</feature>
<feature type="short sequence motif" description="'ERGGDP' region" evidence="1">
    <location>
        <begin position="187"/>
        <end position="192"/>
    </location>
</feature>
<feature type="short sequence motif" description="'KMSKS' region" evidence="1">
    <location>
        <begin position="289"/>
        <end position="293"/>
    </location>
</feature>
<feature type="binding site" evidence="1">
    <location>
        <begin position="43"/>
        <end position="46"/>
    </location>
    <ligand>
        <name>L-cysteinyl-5'-AMP</name>
        <dbReference type="ChEBI" id="CHEBI:144924"/>
    </ligand>
</feature>
<feature type="binding site" evidence="1">
    <location>
        <position position="43"/>
    </location>
    <ligand>
        <name>Zn(2+)</name>
        <dbReference type="ChEBI" id="CHEBI:29105"/>
    </ligand>
</feature>
<feature type="binding site" evidence="1">
    <location>
        <position position="58"/>
    </location>
    <ligand>
        <name>L-cysteinyl-5'-AMP</name>
        <dbReference type="ChEBI" id="CHEBI:144924"/>
    </ligand>
</feature>
<feature type="binding site" evidence="1">
    <location>
        <begin position="81"/>
        <end position="83"/>
    </location>
    <ligand>
        <name>L-cysteinyl-5'-AMP</name>
        <dbReference type="ChEBI" id="CHEBI:144924"/>
    </ligand>
</feature>
<feature type="binding site" evidence="1">
    <location>
        <position position="227"/>
    </location>
    <ligand>
        <name>L-cysteinyl-5'-AMP</name>
        <dbReference type="ChEBI" id="CHEBI:144924"/>
    </ligand>
</feature>
<feature type="binding site" evidence="1">
    <location>
        <position position="231"/>
    </location>
    <ligand>
        <name>Zn(2+)</name>
        <dbReference type="ChEBI" id="CHEBI:29105"/>
    </ligand>
</feature>
<feature type="binding site" evidence="1">
    <location>
        <begin position="249"/>
        <end position="251"/>
    </location>
    <ligand>
        <name>L-cysteinyl-5'-AMP</name>
        <dbReference type="ChEBI" id="CHEBI:144924"/>
    </ligand>
</feature>
<feature type="binding site" evidence="1">
    <location>
        <position position="256"/>
    </location>
    <ligand>
        <name>Zn(2+)</name>
        <dbReference type="ChEBI" id="CHEBI:29105"/>
    </ligand>
</feature>
<feature type="binding site" evidence="1">
    <location>
        <position position="283"/>
    </location>
    <ligand>
        <name>L-cysteinyl-5'-AMP</name>
        <dbReference type="ChEBI" id="CHEBI:144924"/>
    </ligand>
</feature>
<comment type="function">
    <text evidence="1">Catalyzes the ATP-dependent condensation of GlcN-Ins and L-cysteine to form L-Cys-GlcN-Ins.</text>
</comment>
<comment type="catalytic activity">
    <reaction evidence="1">
        <text>1D-myo-inositol 2-amino-2-deoxy-alpha-D-glucopyranoside + L-cysteine + ATP = 1D-myo-inositol 2-(L-cysteinylamino)-2-deoxy-alpha-D-glucopyranoside + AMP + diphosphate + H(+)</text>
        <dbReference type="Rhea" id="RHEA:26176"/>
        <dbReference type="ChEBI" id="CHEBI:15378"/>
        <dbReference type="ChEBI" id="CHEBI:30616"/>
        <dbReference type="ChEBI" id="CHEBI:33019"/>
        <dbReference type="ChEBI" id="CHEBI:35235"/>
        <dbReference type="ChEBI" id="CHEBI:58886"/>
        <dbReference type="ChEBI" id="CHEBI:58887"/>
        <dbReference type="ChEBI" id="CHEBI:456215"/>
        <dbReference type="EC" id="6.3.1.13"/>
    </reaction>
</comment>
<comment type="cofactor">
    <cofactor evidence="1">
        <name>Zn(2+)</name>
        <dbReference type="ChEBI" id="CHEBI:29105"/>
    </cofactor>
    <text evidence="1">Binds 1 zinc ion per subunit.</text>
</comment>
<comment type="subunit">
    <text evidence="1">Monomer.</text>
</comment>
<comment type="similarity">
    <text evidence="1">Belongs to the class-I aminoacyl-tRNA synthetase family. MshC subfamily.</text>
</comment>
<keyword id="KW-0067">ATP-binding</keyword>
<keyword id="KW-0436">Ligase</keyword>
<keyword id="KW-0479">Metal-binding</keyword>
<keyword id="KW-0547">Nucleotide-binding</keyword>
<keyword id="KW-0862">Zinc</keyword>
<accession>Q0SIC6</accession>
<organism>
    <name type="scientific">Rhodococcus jostii (strain RHA1)</name>
    <dbReference type="NCBI Taxonomy" id="101510"/>
    <lineage>
        <taxon>Bacteria</taxon>
        <taxon>Bacillati</taxon>
        <taxon>Actinomycetota</taxon>
        <taxon>Actinomycetes</taxon>
        <taxon>Mycobacteriales</taxon>
        <taxon>Nocardiaceae</taxon>
        <taxon>Rhodococcus</taxon>
    </lineage>
</organism>
<evidence type="ECO:0000255" key="1">
    <source>
        <dbReference type="HAMAP-Rule" id="MF_01697"/>
    </source>
</evidence>
<evidence type="ECO:0000256" key="2">
    <source>
        <dbReference type="SAM" id="MobiDB-lite"/>
    </source>
</evidence>